<feature type="chain" id="PRO_0000212617" description="Divalent metal cation transporter MntH">
    <location>
        <begin position="1"/>
        <end position="412"/>
    </location>
</feature>
<feature type="topological domain" description="Cytoplasmic" evidence="1">
    <location>
        <begin position="1"/>
        <end position="19"/>
    </location>
</feature>
<feature type="transmembrane region" description="Helical" evidence="1">
    <location>
        <begin position="20"/>
        <end position="39"/>
    </location>
</feature>
<feature type="topological domain" description="Periplasmic" evidence="1">
    <location>
        <begin position="40"/>
        <end position="51"/>
    </location>
</feature>
<feature type="transmembrane region" description="Helical" evidence="1">
    <location>
        <begin position="52"/>
        <end position="71"/>
    </location>
</feature>
<feature type="topological domain" description="Cytoplasmic" evidence="1">
    <location>
        <begin position="72"/>
        <end position="95"/>
    </location>
</feature>
<feature type="transmembrane region" description="Helical" evidence="1">
    <location>
        <begin position="96"/>
        <end position="118"/>
    </location>
</feature>
<feature type="topological domain" description="Periplasmic" evidence="1">
    <location>
        <begin position="119"/>
        <end position="125"/>
    </location>
</feature>
<feature type="transmembrane region" description="Helical" evidence="1">
    <location>
        <begin position="126"/>
        <end position="145"/>
    </location>
</feature>
<feature type="topological domain" description="Cytoplasmic" evidence="1">
    <location>
        <begin position="146"/>
        <end position="155"/>
    </location>
</feature>
<feature type="transmembrane region" description="Helical" evidence="1">
    <location>
        <begin position="156"/>
        <end position="175"/>
    </location>
</feature>
<feature type="topological domain" description="Periplasmic" evidence="1">
    <location>
        <begin position="176"/>
        <end position="196"/>
    </location>
</feature>
<feature type="transmembrane region" description="Helical" evidence="1">
    <location>
        <begin position="197"/>
        <end position="220"/>
    </location>
</feature>
<feature type="topological domain" description="Cytoplasmic" evidence="1">
    <location>
        <begin position="221"/>
        <end position="238"/>
    </location>
</feature>
<feature type="transmembrane region" description="Helical" evidence="1">
    <location>
        <begin position="239"/>
        <end position="258"/>
    </location>
</feature>
<feature type="topological domain" description="Periplasmic" evidence="1">
    <location>
        <begin position="259"/>
        <end position="276"/>
    </location>
</feature>
<feature type="transmembrane region" description="Helical" evidence="1">
    <location>
        <begin position="277"/>
        <end position="297"/>
    </location>
</feature>
<feature type="topological domain" description="Cytoplasmic" evidence="1">
    <location>
        <begin position="298"/>
        <end position="327"/>
    </location>
</feature>
<feature type="transmembrane region" description="Helical" evidence="1">
    <location>
        <begin position="328"/>
        <end position="344"/>
    </location>
</feature>
<feature type="topological domain" description="Periplasmic" evidence="1">
    <location>
        <begin position="345"/>
        <end position="350"/>
    </location>
</feature>
<feature type="transmembrane region" description="Helical" evidence="1">
    <location>
        <begin position="351"/>
        <end position="370"/>
    </location>
</feature>
<feature type="topological domain" description="Cytoplasmic" evidence="1">
    <location>
        <begin position="371"/>
        <end position="387"/>
    </location>
</feature>
<feature type="transmembrane region" description="Helical" evidence="1">
    <location>
        <begin position="388"/>
        <end position="406"/>
    </location>
</feature>
<feature type="topological domain" description="Periplasmic" evidence="1">
    <location>
        <begin position="407"/>
        <end position="412"/>
    </location>
</feature>
<feature type="mutagenesis site" description="Loss of function." evidence="5">
    <original>D</original>
    <variation>E</variation>
    <variation>N</variation>
    <location>
        <position position="34"/>
    </location>
</feature>
<feature type="mutagenesis site" description="Loss of function." evidence="5">
    <original>P</original>
    <variation>N</variation>
    <variation>Q</variation>
    <location>
        <position position="35"/>
    </location>
</feature>
<feature type="mutagenesis site" description="Loss of function." evidence="5">
    <original>G</original>
    <variation>P</variation>
    <location>
        <position position="36"/>
    </location>
</feature>
<feature type="mutagenesis site" description="Loss of function." evidence="5">
    <original>N</original>
    <variation>D</variation>
    <location>
        <position position="37"/>
    </location>
</feature>
<feature type="mutagenesis site" description="Loss of function." evidence="5">
    <original>E</original>
    <variation>D</variation>
    <variation>Q</variation>
    <location>
        <position position="102"/>
    </location>
</feature>
<feature type="mutagenesis site" description="Transports manganese to a very low level." evidence="5">
    <original>D</original>
    <variation>E</variation>
    <variation>N</variation>
    <location>
        <position position="109"/>
    </location>
</feature>
<feature type="mutagenesis site" description="Transports manganese to a very low level." evidence="5">
    <original>E</original>
    <variation>D</variation>
    <variation>Q</variation>
    <location>
        <position position="112"/>
    </location>
</feature>
<feature type="mutagenesis site" description="Loss of function." evidence="5">
    <original>G</original>
    <variation>A</variation>
    <variation>P</variation>
    <location>
        <position position="115"/>
    </location>
</feature>
<feature type="mutagenesis site" description="Transports manganese to a level half of that of wild-type." evidence="5">
    <original>E</original>
    <variation>Q</variation>
    <location>
        <position position="154"/>
    </location>
</feature>
<feature type="mutagenesis site" description="Transports manganese to a very low level." evidence="5">
    <original>D</original>
    <variation>N</variation>
    <location>
        <position position="238"/>
    </location>
</feature>
<sequence>MTNYRVESSSGRAARKMRLALMGPAFIAAIGYIDPGNFATNIQAGASFGYQLLWVVVWANLMAMLIQILSAKLGIATGKNLAEQIRDHYPRPVVWFYWVQAEIIAMATDLAEFIGAAIGFKLILGVSLLQGAVLTGIATFLILMLQRRGQKPLEKVIGGLLLFVAAAYIVELIFSQPNLAQLGKGMVIPSLPTSEAVFLAAGVLGATIMPHVIYLHSSLTQHLHGGSRQQRYSATKWDVAIAMTIAGFVNLAMMATAAAAFHFSGHTGVADLDEAYLTLQPLLSHAAATVFGLSLVAAGLSSTVVGTLAGQVVMQGFIRFHIPLWVRRTVTMLPSFIVILMGLDPTRILVMSQVLLSFGIALALVPLLIFTSDSKLMGDLVNSKRVKQTGWVIVVLVVALNIWLLVGTALGL</sequence>
<dbReference type="EMBL" id="AF161318">
    <property type="protein sequence ID" value="AAD46617.1"/>
    <property type="molecule type" value="Genomic_DNA"/>
</dbReference>
<dbReference type="EMBL" id="U00096">
    <property type="protein sequence ID" value="AAC75451.1"/>
    <property type="molecule type" value="Genomic_DNA"/>
</dbReference>
<dbReference type="EMBL" id="AP009048">
    <property type="protein sequence ID" value="BAA16262.1"/>
    <property type="molecule type" value="Genomic_DNA"/>
</dbReference>
<dbReference type="PIR" id="E65013">
    <property type="entry name" value="E65013"/>
</dbReference>
<dbReference type="RefSeq" id="NP_416893.1">
    <property type="nucleotide sequence ID" value="NC_000913.3"/>
</dbReference>
<dbReference type="RefSeq" id="WP_000186369.1">
    <property type="nucleotide sequence ID" value="NZ_STEB01000008.1"/>
</dbReference>
<dbReference type="SMR" id="P0A769"/>
<dbReference type="BioGRID" id="4259183">
    <property type="interactions" value="8"/>
</dbReference>
<dbReference type="DIP" id="DIP-48004N"/>
<dbReference type="FunCoup" id="P0A769">
    <property type="interactions" value="512"/>
</dbReference>
<dbReference type="IntAct" id="P0A769">
    <property type="interactions" value="1"/>
</dbReference>
<dbReference type="STRING" id="511145.b2392"/>
<dbReference type="TCDB" id="2.A.55.3.1">
    <property type="family name" value="the metal ion (mn(2+)-iron) transporter (nramp) family"/>
</dbReference>
<dbReference type="PaxDb" id="511145-b2392"/>
<dbReference type="EnsemblBacteria" id="AAC75451">
    <property type="protein sequence ID" value="AAC75451"/>
    <property type="gene ID" value="b2392"/>
</dbReference>
<dbReference type="GeneID" id="946899"/>
<dbReference type="KEGG" id="ecj:JW2388"/>
<dbReference type="KEGG" id="eco:b2392"/>
<dbReference type="KEGG" id="ecoc:C3026_13295"/>
<dbReference type="PATRIC" id="fig|1411691.4.peg.4337"/>
<dbReference type="EchoBASE" id="EB3909"/>
<dbReference type="eggNOG" id="COG1914">
    <property type="taxonomic scope" value="Bacteria"/>
</dbReference>
<dbReference type="HOGENOM" id="CLU_020088_2_0_6"/>
<dbReference type="InParanoid" id="P0A769"/>
<dbReference type="OMA" id="STYLVWT"/>
<dbReference type="OrthoDB" id="9787548at2"/>
<dbReference type="PhylomeDB" id="P0A769"/>
<dbReference type="BioCyc" id="EcoCyc:YFEP-MONOMER"/>
<dbReference type="BioCyc" id="MetaCyc:YFEP-MONOMER"/>
<dbReference type="PRO" id="PR:P0A769"/>
<dbReference type="Proteomes" id="UP000000625">
    <property type="component" value="Chromosome"/>
</dbReference>
<dbReference type="GO" id="GO:0005886">
    <property type="term" value="C:plasma membrane"/>
    <property type="evidence" value="ECO:0000314"/>
    <property type="project" value="EcoliWiki"/>
</dbReference>
<dbReference type="GO" id="GO:0015086">
    <property type="term" value="F:cadmium ion transmembrane transporter activity"/>
    <property type="evidence" value="ECO:0000315"/>
    <property type="project" value="EcoliWiki"/>
</dbReference>
<dbReference type="GO" id="GO:0005384">
    <property type="term" value="F:manganese ion transmembrane transporter activity"/>
    <property type="evidence" value="ECO:0000314"/>
    <property type="project" value="EcoCyc"/>
</dbReference>
<dbReference type="GO" id="GO:0046872">
    <property type="term" value="F:metal ion binding"/>
    <property type="evidence" value="ECO:0007669"/>
    <property type="project" value="UniProtKB-UniRule"/>
</dbReference>
<dbReference type="GO" id="GO:0015078">
    <property type="term" value="F:proton transmembrane transporter activity"/>
    <property type="evidence" value="ECO:0000315"/>
    <property type="project" value="EcoliWiki"/>
</dbReference>
<dbReference type="GO" id="GO:0015293">
    <property type="term" value="F:symporter activity"/>
    <property type="evidence" value="ECO:0000314"/>
    <property type="project" value="EcoliWiki"/>
</dbReference>
<dbReference type="GO" id="GO:0015691">
    <property type="term" value="P:cadmium ion transport"/>
    <property type="evidence" value="ECO:0000314"/>
    <property type="project" value="EcoliWiki"/>
</dbReference>
<dbReference type="GO" id="GO:0034599">
    <property type="term" value="P:cellular response to oxidative stress"/>
    <property type="evidence" value="ECO:0000269"/>
    <property type="project" value="EcoCyc"/>
</dbReference>
<dbReference type="GO" id="GO:0006824">
    <property type="term" value="P:cobalt ion transport"/>
    <property type="evidence" value="ECO:0000315"/>
    <property type="project" value="EcoliWiki"/>
</dbReference>
<dbReference type="GO" id="GO:0034755">
    <property type="term" value="P:iron ion transmembrane transport"/>
    <property type="evidence" value="ECO:0000318"/>
    <property type="project" value="GO_Central"/>
</dbReference>
<dbReference type="GO" id="GO:0006826">
    <property type="term" value="P:iron ion transport"/>
    <property type="evidence" value="ECO:0000315"/>
    <property type="project" value="EcoliWiki"/>
</dbReference>
<dbReference type="GO" id="GO:0140967">
    <property type="term" value="P:manganese import into cell"/>
    <property type="evidence" value="ECO:0000314"/>
    <property type="project" value="EcoCyc"/>
</dbReference>
<dbReference type="GO" id="GO:0006828">
    <property type="term" value="P:manganese ion transport"/>
    <property type="evidence" value="ECO:0000315"/>
    <property type="project" value="EcoliWiki"/>
</dbReference>
<dbReference type="GO" id="GO:0030001">
    <property type="term" value="P:metal ion transport"/>
    <property type="evidence" value="ECO:0000315"/>
    <property type="project" value="EcoliWiki"/>
</dbReference>
<dbReference type="HAMAP" id="MF_00221">
    <property type="entry name" value="NRAMP"/>
    <property type="match status" value="1"/>
</dbReference>
<dbReference type="InterPro" id="IPR001046">
    <property type="entry name" value="NRAMP_fam"/>
</dbReference>
<dbReference type="NCBIfam" id="TIGR01197">
    <property type="entry name" value="nramp"/>
    <property type="match status" value="1"/>
</dbReference>
<dbReference type="NCBIfam" id="NF037982">
    <property type="entry name" value="Nramp_1"/>
    <property type="match status" value="1"/>
</dbReference>
<dbReference type="NCBIfam" id="NF001923">
    <property type="entry name" value="PRK00701.1"/>
    <property type="match status" value="1"/>
</dbReference>
<dbReference type="PANTHER" id="PTHR11706:SF33">
    <property type="entry name" value="NATURAL RESISTANCE-ASSOCIATED MACROPHAGE PROTEIN 2"/>
    <property type="match status" value="1"/>
</dbReference>
<dbReference type="PANTHER" id="PTHR11706">
    <property type="entry name" value="SOLUTE CARRIER PROTEIN FAMILY 11 MEMBER"/>
    <property type="match status" value="1"/>
</dbReference>
<dbReference type="Pfam" id="PF01566">
    <property type="entry name" value="Nramp"/>
    <property type="match status" value="1"/>
</dbReference>
<dbReference type="PRINTS" id="PR00447">
    <property type="entry name" value="NATRESASSCMP"/>
</dbReference>
<keyword id="KW-0997">Cell inner membrane</keyword>
<keyword id="KW-1003">Cell membrane</keyword>
<keyword id="KW-0406">Ion transport</keyword>
<keyword id="KW-0408">Iron</keyword>
<keyword id="KW-0464">Manganese</keyword>
<keyword id="KW-0472">Membrane</keyword>
<keyword id="KW-1185">Reference proteome</keyword>
<keyword id="KW-0769">Symport</keyword>
<keyword id="KW-0812">Transmembrane</keyword>
<keyword id="KW-1133">Transmembrane helix</keyword>
<keyword id="KW-0813">Transport</keyword>
<organism>
    <name type="scientific">Escherichia coli (strain K12)</name>
    <dbReference type="NCBI Taxonomy" id="83333"/>
    <lineage>
        <taxon>Bacteria</taxon>
        <taxon>Pseudomonadati</taxon>
        <taxon>Pseudomonadota</taxon>
        <taxon>Gammaproteobacteria</taxon>
        <taxon>Enterobacterales</taxon>
        <taxon>Enterobacteriaceae</taxon>
        <taxon>Escherichia</taxon>
    </lineage>
</organism>
<comment type="function">
    <text evidence="1 2 3">H(+)-stimulated, divalent metal cation uptake system. Involved in manganese and iron uptake. Can also transport cadmium, cobalt, zinc and to a lesser extent nickel and copper. Involved in response to reactive oxygen.</text>
</comment>
<comment type="interaction">
    <interactant intactId="EBI-551337">
        <id>P0A769</id>
    </interactant>
    <interactant intactId="EBI-547441">
        <id>P09372</id>
        <label>grpE</label>
    </interactant>
    <organismsDiffer>false</organismsDiffer>
    <experiments>3</experiments>
</comment>
<comment type="subcellular location">
    <subcellularLocation>
        <location evidence="1 4">Cell inner membrane</location>
        <topology evidence="1 4">Multi-pass membrane protein</topology>
    </subcellularLocation>
</comment>
<comment type="similarity">
    <text evidence="1">Belongs to the NRAMP family.</text>
</comment>
<reference key="1">
    <citation type="journal article" date="2000" name="Mol. Microbiol.">
        <title>The NRAMP proteins of Salmonella typhimurium and Escherichia coli are selective manganese transporters involved in the response to reactive oxygen.</title>
        <authorList>
            <person name="Kehres D.G."/>
            <person name="Zaharik M.L."/>
            <person name="Finlay B.B."/>
            <person name="Maguire M.E."/>
        </authorList>
    </citation>
    <scope>NUCLEOTIDE SEQUENCE [GENOMIC DNA]</scope>
    <scope>FUNCTION</scope>
    <source>
        <strain>K12 / MM1955</strain>
    </source>
</reference>
<reference key="2">
    <citation type="journal article" date="1997" name="DNA Res.">
        <title>Construction of a contiguous 874-kb sequence of the Escherichia coli-K12 genome corresponding to 50.0-68.8 min on the linkage map and analysis of its sequence features.</title>
        <authorList>
            <person name="Yamamoto Y."/>
            <person name="Aiba H."/>
            <person name="Baba T."/>
            <person name="Hayashi K."/>
            <person name="Inada T."/>
            <person name="Isono K."/>
            <person name="Itoh T."/>
            <person name="Kimura S."/>
            <person name="Kitagawa M."/>
            <person name="Makino K."/>
            <person name="Miki T."/>
            <person name="Mitsuhashi N."/>
            <person name="Mizobuchi K."/>
            <person name="Mori H."/>
            <person name="Nakade S."/>
            <person name="Nakamura Y."/>
            <person name="Nashimoto H."/>
            <person name="Oshima T."/>
            <person name="Oyama S."/>
            <person name="Saito N."/>
            <person name="Sampei G."/>
            <person name="Satoh Y."/>
            <person name="Sivasundaram S."/>
            <person name="Tagami H."/>
            <person name="Takahashi H."/>
            <person name="Takeda J."/>
            <person name="Takemoto K."/>
            <person name="Uehara K."/>
            <person name="Wada C."/>
            <person name="Yamagata S."/>
            <person name="Horiuchi T."/>
        </authorList>
    </citation>
    <scope>NUCLEOTIDE SEQUENCE [LARGE SCALE GENOMIC DNA]</scope>
    <source>
        <strain>K12 / W3110 / ATCC 27325 / DSM 5911</strain>
    </source>
</reference>
<reference key="3">
    <citation type="journal article" date="1997" name="Science">
        <title>The complete genome sequence of Escherichia coli K-12.</title>
        <authorList>
            <person name="Blattner F.R."/>
            <person name="Plunkett G. III"/>
            <person name="Bloch C.A."/>
            <person name="Perna N.T."/>
            <person name="Burland V."/>
            <person name="Riley M."/>
            <person name="Collado-Vides J."/>
            <person name="Glasner J.D."/>
            <person name="Rode C.K."/>
            <person name="Mayhew G.F."/>
            <person name="Gregor J."/>
            <person name="Davis N.W."/>
            <person name="Kirkpatrick H.A."/>
            <person name="Goeden M.A."/>
            <person name="Rose D.J."/>
            <person name="Mau B."/>
            <person name="Shao Y."/>
        </authorList>
    </citation>
    <scope>NUCLEOTIDE SEQUENCE [LARGE SCALE GENOMIC DNA]</scope>
    <source>
        <strain>K12 / MG1655 / ATCC 47076</strain>
    </source>
</reference>
<reference key="4">
    <citation type="journal article" date="2006" name="Mol. Syst. Biol.">
        <title>Highly accurate genome sequences of Escherichia coli K-12 strains MG1655 and W3110.</title>
        <authorList>
            <person name="Hayashi K."/>
            <person name="Morooka N."/>
            <person name="Yamamoto Y."/>
            <person name="Fujita K."/>
            <person name="Isono K."/>
            <person name="Choi S."/>
            <person name="Ohtsubo E."/>
            <person name="Baba T."/>
            <person name="Wanner B.L."/>
            <person name="Mori H."/>
            <person name="Horiuchi T."/>
        </authorList>
    </citation>
    <scope>NUCLEOTIDE SEQUENCE [LARGE SCALE GENOMIC DNA]</scope>
    <source>
        <strain>K12 / W3110 / ATCC 27325 / DSM 5911</strain>
    </source>
</reference>
<reference key="5">
    <citation type="journal article" date="2000" name="Mol. Microbiol.">
        <title>Identification of the Escherichia coli K-12 Nramp orthologue (MntH) as a selective divalent metal ion transporter.</title>
        <authorList>
            <person name="Makui H."/>
            <person name="Roig E."/>
            <person name="Cole S.T."/>
            <person name="Helmann J.D."/>
            <person name="Gros P."/>
            <person name="Cellier M.F.M."/>
        </authorList>
    </citation>
    <scope>FUNCTION</scope>
    <source>
        <strain>K12</strain>
    </source>
</reference>
<reference key="6">
    <citation type="journal article" date="2004" name="J. Biol. Chem.">
        <title>Determination of transmembrane topology of the Escherichia coli natural resistance-associated macrophage protein (Nramp) ortholog.</title>
        <authorList>
            <person name="Courville P."/>
            <person name="Chaloupka R."/>
            <person name="Veyrier F."/>
            <person name="Cellier M.F.M."/>
        </authorList>
    </citation>
    <scope>SUBCELLULAR LOCATION</scope>
    <scope>TOPOLOGY</scope>
</reference>
<reference key="7">
    <citation type="journal article" date="2004" name="J. Membr. Biol.">
        <title>Importance of conserved acidic residues in mntH, the Nramp homolog of Escherichia coli.</title>
        <authorList>
            <person name="Haemig H.A."/>
            <person name="Brooker R.J."/>
        </authorList>
    </citation>
    <scope>MUTAGENESIS OF ASP-34; PRO-35; GLY-36; ASN-37; GLU-102; ASP-109; GLU-112; GLY-115; GLU-154 AND ASP-238</scope>
</reference>
<reference key="8">
    <citation type="journal article" date="2005" name="Science">
        <title>Global topology analysis of the Escherichia coli inner membrane proteome.</title>
        <authorList>
            <person name="Daley D.O."/>
            <person name="Rapp M."/>
            <person name="Granseth E."/>
            <person name="Melen K."/>
            <person name="Drew D."/>
            <person name="von Heijne G."/>
        </authorList>
    </citation>
    <scope>TOPOLOGY [LARGE SCALE ANALYSIS]</scope>
    <source>
        <strain>K12 / MG1655 / ATCC 47076</strain>
    </source>
</reference>
<name>MNTH_ECOLI</name>
<gene>
    <name evidence="1" type="primary">mntH</name>
    <name type="synonym">yfeP</name>
    <name type="ordered locus">b2392</name>
    <name type="ordered locus">JW2388</name>
</gene>
<protein>
    <recommendedName>
        <fullName evidence="1">Divalent metal cation transporter MntH</fullName>
    </recommendedName>
</protein>
<evidence type="ECO:0000255" key="1">
    <source>
        <dbReference type="HAMAP-Rule" id="MF_00221"/>
    </source>
</evidence>
<evidence type="ECO:0000269" key="2">
    <source>
    </source>
</evidence>
<evidence type="ECO:0000269" key="3">
    <source>
    </source>
</evidence>
<evidence type="ECO:0000269" key="4">
    <source>
    </source>
</evidence>
<evidence type="ECO:0000269" key="5">
    <source>
    </source>
</evidence>
<proteinExistence type="evidence at protein level"/>
<accession>P0A769</accession>
<accession>P77145</accession>